<sequence>MIPDVSQALAWLEKHPQALKGIQRGLERETLRVNADGTLATTGHPEALGSALTHKWITTDFAEALLEFITPVDGDIQHMLTFMRDLHRYTARKLGDERMWPLSMPCYIAEGQDIELAQYGTSNTGRFKTLYREGLKNRYGALMQTISGVHYNFSLPMAFWQAKCGVTEGEAAKEKISAGYFRLIRNYYRFGWVIPYLFGASPAICSSFLQGKPTTLPFEKTDCGMYYLPYATSLRLSDLGYTNKSQSNLGITFNDLHEYVAGLKRAIKTPSEEYARIGVEKDGKRLQINSNVLQIENELYAPIRPKRVTRSGESPSDALLRGGIEYIEVRSLDINPFSPIGVDEQQVRFLDLFMVWCVLADAPEMSSDELLCTRTNWNRVILEGRKPGLTLGIGCETAQFPLPKVGKDLFRDLKRVAQTLDSIHGGEEYQKVCDELVACFDNPELTFSARILRSMIDEGIGGTGKAFGEAYRNLLREEPLEILQEEEFIAERDASVRRQQEIEAADTEPFAAWLAKHA</sequence>
<reference key="1">
    <citation type="journal article" date="2011" name="J. Bacteriol.">
        <title>Comparative genomics of 28 Salmonella enterica isolates: evidence for CRISPR-mediated adaptive sublineage evolution.</title>
        <authorList>
            <person name="Fricke W.F."/>
            <person name="Mammel M.K."/>
            <person name="McDermott P.F."/>
            <person name="Tartera C."/>
            <person name="White D.G."/>
            <person name="Leclerc J.E."/>
            <person name="Ravel J."/>
            <person name="Cebula T.A."/>
        </authorList>
    </citation>
    <scope>NUCLEOTIDE SEQUENCE [LARGE SCALE GENOMIC DNA]</scope>
    <source>
        <strain>CVM19633</strain>
    </source>
</reference>
<name>GSH1_SALSV</name>
<feature type="chain" id="PRO_1000129608" description="Glutamate--cysteine ligase">
    <location>
        <begin position="1"/>
        <end position="518"/>
    </location>
</feature>
<accession>B4TT00</accession>
<proteinExistence type="inferred from homology"/>
<dbReference type="EC" id="6.3.2.2" evidence="1"/>
<dbReference type="EMBL" id="CP001127">
    <property type="protein sequence ID" value="ACF92243.1"/>
    <property type="molecule type" value="Genomic_DNA"/>
</dbReference>
<dbReference type="RefSeq" id="WP_000611821.1">
    <property type="nucleotide sequence ID" value="NC_011094.1"/>
</dbReference>
<dbReference type="SMR" id="B4TT00"/>
<dbReference type="KEGG" id="sew:SeSA_A2968"/>
<dbReference type="HOGENOM" id="CLU_020728_3_0_6"/>
<dbReference type="UniPathway" id="UPA00142">
    <property type="reaction ID" value="UER00209"/>
</dbReference>
<dbReference type="Proteomes" id="UP000001865">
    <property type="component" value="Chromosome"/>
</dbReference>
<dbReference type="GO" id="GO:0005829">
    <property type="term" value="C:cytosol"/>
    <property type="evidence" value="ECO:0007669"/>
    <property type="project" value="TreeGrafter"/>
</dbReference>
<dbReference type="GO" id="GO:0005524">
    <property type="term" value="F:ATP binding"/>
    <property type="evidence" value="ECO:0007669"/>
    <property type="project" value="UniProtKB-KW"/>
</dbReference>
<dbReference type="GO" id="GO:0004357">
    <property type="term" value="F:glutamate-cysteine ligase activity"/>
    <property type="evidence" value="ECO:0007669"/>
    <property type="project" value="UniProtKB-UniRule"/>
</dbReference>
<dbReference type="GO" id="GO:0046872">
    <property type="term" value="F:metal ion binding"/>
    <property type="evidence" value="ECO:0007669"/>
    <property type="project" value="TreeGrafter"/>
</dbReference>
<dbReference type="GO" id="GO:0006750">
    <property type="term" value="P:glutathione biosynthetic process"/>
    <property type="evidence" value="ECO:0007669"/>
    <property type="project" value="UniProtKB-UniRule"/>
</dbReference>
<dbReference type="FunFam" id="3.30.590.20:FF:000001">
    <property type="entry name" value="Glutamate--cysteine ligase"/>
    <property type="match status" value="1"/>
</dbReference>
<dbReference type="Gene3D" id="3.30.590.20">
    <property type="match status" value="1"/>
</dbReference>
<dbReference type="HAMAP" id="MF_00578">
    <property type="entry name" value="Glu_cys_ligase"/>
    <property type="match status" value="1"/>
</dbReference>
<dbReference type="InterPro" id="IPR014746">
    <property type="entry name" value="Gln_synth/guanido_kin_cat_dom"/>
</dbReference>
<dbReference type="InterPro" id="IPR007370">
    <property type="entry name" value="Glu_cys_ligase"/>
</dbReference>
<dbReference type="InterPro" id="IPR006334">
    <property type="entry name" value="Glut_cys_ligase"/>
</dbReference>
<dbReference type="NCBIfam" id="TIGR01434">
    <property type="entry name" value="glu_cys_ligase"/>
    <property type="match status" value="1"/>
</dbReference>
<dbReference type="PANTHER" id="PTHR38761">
    <property type="entry name" value="GLUTAMATE--CYSTEINE LIGASE"/>
    <property type="match status" value="1"/>
</dbReference>
<dbReference type="PANTHER" id="PTHR38761:SF1">
    <property type="entry name" value="GLUTAMATE--CYSTEINE LIGASE"/>
    <property type="match status" value="1"/>
</dbReference>
<dbReference type="Pfam" id="PF04262">
    <property type="entry name" value="Glu_cys_ligase"/>
    <property type="match status" value="1"/>
</dbReference>
<dbReference type="SUPFAM" id="SSF55931">
    <property type="entry name" value="Glutamine synthetase/guanido kinase"/>
    <property type="match status" value="1"/>
</dbReference>
<keyword id="KW-0067">ATP-binding</keyword>
<keyword id="KW-0317">Glutathione biosynthesis</keyword>
<keyword id="KW-0436">Ligase</keyword>
<keyword id="KW-0547">Nucleotide-binding</keyword>
<evidence type="ECO:0000255" key="1">
    <source>
        <dbReference type="HAMAP-Rule" id="MF_00578"/>
    </source>
</evidence>
<gene>
    <name evidence="1" type="primary">gshA</name>
    <name type="ordered locus">SeSA_A2968</name>
</gene>
<protein>
    <recommendedName>
        <fullName evidence="1">Glutamate--cysteine ligase</fullName>
        <ecNumber evidence="1">6.3.2.2</ecNumber>
    </recommendedName>
    <alternativeName>
        <fullName evidence="1">Gamma-ECS</fullName>
        <shortName evidence="1">GCS</shortName>
    </alternativeName>
    <alternativeName>
        <fullName evidence="1">Gamma-glutamylcysteine synthetase</fullName>
    </alternativeName>
</protein>
<organism>
    <name type="scientific">Salmonella schwarzengrund (strain CVM19633)</name>
    <dbReference type="NCBI Taxonomy" id="439843"/>
    <lineage>
        <taxon>Bacteria</taxon>
        <taxon>Pseudomonadati</taxon>
        <taxon>Pseudomonadota</taxon>
        <taxon>Gammaproteobacteria</taxon>
        <taxon>Enterobacterales</taxon>
        <taxon>Enterobacteriaceae</taxon>
        <taxon>Salmonella</taxon>
    </lineage>
</organism>
<comment type="catalytic activity">
    <reaction evidence="1">
        <text>L-cysteine + L-glutamate + ATP = gamma-L-glutamyl-L-cysteine + ADP + phosphate + H(+)</text>
        <dbReference type="Rhea" id="RHEA:13285"/>
        <dbReference type="ChEBI" id="CHEBI:15378"/>
        <dbReference type="ChEBI" id="CHEBI:29985"/>
        <dbReference type="ChEBI" id="CHEBI:30616"/>
        <dbReference type="ChEBI" id="CHEBI:35235"/>
        <dbReference type="ChEBI" id="CHEBI:43474"/>
        <dbReference type="ChEBI" id="CHEBI:58173"/>
        <dbReference type="ChEBI" id="CHEBI:456216"/>
        <dbReference type="EC" id="6.3.2.2"/>
    </reaction>
</comment>
<comment type="pathway">
    <text evidence="1">Sulfur metabolism; glutathione biosynthesis; glutathione from L-cysteine and L-glutamate: step 1/2.</text>
</comment>
<comment type="similarity">
    <text evidence="1">Belongs to the glutamate--cysteine ligase type 1 family. Type 1 subfamily.</text>
</comment>